<organism>
    <name type="scientific">Methylobacillus flagellatus (strain ATCC 51484 / DSM 6875 / VKM B-1610 / KT)</name>
    <dbReference type="NCBI Taxonomy" id="265072"/>
    <lineage>
        <taxon>Bacteria</taxon>
        <taxon>Pseudomonadati</taxon>
        <taxon>Pseudomonadota</taxon>
        <taxon>Betaproteobacteria</taxon>
        <taxon>Nitrosomonadales</taxon>
        <taxon>Methylophilaceae</taxon>
        <taxon>Methylobacillus</taxon>
    </lineage>
</organism>
<gene>
    <name evidence="1" type="primary">ruvB</name>
    <name type="ordered locus">Mfla_2344</name>
</gene>
<name>RUVB_METFK</name>
<comment type="function">
    <text evidence="1">The RuvA-RuvB-RuvC complex processes Holliday junction (HJ) DNA during genetic recombination and DNA repair, while the RuvA-RuvB complex plays an important role in the rescue of blocked DNA replication forks via replication fork reversal (RFR). RuvA specifically binds to HJ cruciform DNA, conferring on it an open structure. The RuvB hexamer acts as an ATP-dependent pump, pulling dsDNA into and through the RuvAB complex. RuvB forms 2 homohexamers on either side of HJ DNA bound by 1 or 2 RuvA tetramers; 4 subunits per hexamer contact DNA at a time. Coordinated motions by a converter formed by DNA-disengaged RuvB subunits stimulates ATP hydrolysis and nucleotide exchange. Immobilization of the converter enables RuvB to convert the ATP-contained energy into a lever motion, pulling 2 nucleotides of DNA out of the RuvA tetramer per ATP hydrolyzed, thus driving DNA branch migration. The RuvB motors rotate together with the DNA substrate, which together with the progressing nucleotide cycle form the mechanistic basis for DNA recombination by continuous HJ branch migration. Branch migration allows RuvC to scan DNA until it finds its consensus sequence, where it cleaves and resolves cruciform DNA.</text>
</comment>
<comment type="catalytic activity">
    <reaction evidence="1">
        <text>ATP + H2O = ADP + phosphate + H(+)</text>
        <dbReference type="Rhea" id="RHEA:13065"/>
        <dbReference type="ChEBI" id="CHEBI:15377"/>
        <dbReference type="ChEBI" id="CHEBI:15378"/>
        <dbReference type="ChEBI" id="CHEBI:30616"/>
        <dbReference type="ChEBI" id="CHEBI:43474"/>
        <dbReference type="ChEBI" id="CHEBI:456216"/>
    </reaction>
</comment>
<comment type="subunit">
    <text evidence="1">Homohexamer. Forms an RuvA(8)-RuvB(12)-Holliday junction (HJ) complex. HJ DNA is sandwiched between 2 RuvA tetramers; dsDNA enters through RuvA and exits via RuvB. An RuvB hexamer assembles on each DNA strand where it exits the tetramer. Each RuvB hexamer is contacted by two RuvA subunits (via domain III) on 2 adjacent RuvB subunits; this complex drives branch migration. In the full resolvosome a probable DNA-RuvA(4)-RuvB(12)-RuvC(2) complex forms which resolves the HJ.</text>
</comment>
<comment type="subcellular location">
    <subcellularLocation>
        <location evidence="1">Cytoplasm</location>
    </subcellularLocation>
</comment>
<comment type="domain">
    <text evidence="1">Has 3 domains, the large (RuvB-L) and small ATPase (RuvB-S) domains and the C-terminal head (RuvB-H) domain. The head domain binds DNA, while the ATPase domains jointly bind ATP, ADP or are empty depending on the state of the subunit in the translocation cycle. During a single DNA translocation step the structure of each domain remains the same, but their relative positions change.</text>
</comment>
<comment type="similarity">
    <text evidence="1">Belongs to the RuvB family.</text>
</comment>
<protein>
    <recommendedName>
        <fullName evidence="1">Holliday junction branch migration complex subunit RuvB</fullName>
        <ecNumber evidence="1">3.6.4.-</ecNumber>
    </recommendedName>
</protein>
<keyword id="KW-0067">ATP-binding</keyword>
<keyword id="KW-0963">Cytoplasm</keyword>
<keyword id="KW-0227">DNA damage</keyword>
<keyword id="KW-0233">DNA recombination</keyword>
<keyword id="KW-0234">DNA repair</keyword>
<keyword id="KW-0238">DNA-binding</keyword>
<keyword id="KW-0378">Hydrolase</keyword>
<keyword id="KW-0547">Nucleotide-binding</keyword>
<keyword id="KW-1185">Reference proteome</keyword>
<feature type="chain" id="PRO_1000001428" description="Holliday junction branch migration complex subunit RuvB">
    <location>
        <begin position="1"/>
        <end position="345"/>
    </location>
</feature>
<feature type="region of interest" description="Large ATPase domain (RuvB-L)" evidence="1">
    <location>
        <begin position="4"/>
        <end position="185"/>
    </location>
</feature>
<feature type="region of interest" description="Small ATPAse domain (RuvB-S)" evidence="1">
    <location>
        <begin position="186"/>
        <end position="256"/>
    </location>
</feature>
<feature type="region of interest" description="Head domain (RuvB-H)" evidence="1">
    <location>
        <begin position="259"/>
        <end position="345"/>
    </location>
</feature>
<feature type="binding site" evidence="1">
    <location>
        <position position="24"/>
    </location>
    <ligand>
        <name>ATP</name>
        <dbReference type="ChEBI" id="CHEBI:30616"/>
    </ligand>
</feature>
<feature type="binding site" evidence="1">
    <location>
        <position position="25"/>
    </location>
    <ligand>
        <name>ATP</name>
        <dbReference type="ChEBI" id="CHEBI:30616"/>
    </ligand>
</feature>
<feature type="binding site" evidence="1">
    <location>
        <position position="66"/>
    </location>
    <ligand>
        <name>ATP</name>
        <dbReference type="ChEBI" id="CHEBI:30616"/>
    </ligand>
</feature>
<feature type="binding site" evidence="1">
    <location>
        <position position="69"/>
    </location>
    <ligand>
        <name>ATP</name>
        <dbReference type="ChEBI" id="CHEBI:30616"/>
    </ligand>
</feature>
<feature type="binding site" evidence="1">
    <location>
        <position position="70"/>
    </location>
    <ligand>
        <name>ATP</name>
        <dbReference type="ChEBI" id="CHEBI:30616"/>
    </ligand>
</feature>
<feature type="binding site" evidence="1">
    <location>
        <position position="70"/>
    </location>
    <ligand>
        <name>Mg(2+)</name>
        <dbReference type="ChEBI" id="CHEBI:18420"/>
    </ligand>
</feature>
<feature type="binding site" evidence="1">
    <location>
        <position position="71"/>
    </location>
    <ligand>
        <name>ATP</name>
        <dbReference type="ChEBI" id="CHEBI:30616"/>
    </ligand>
</feature>
<feature type="binding site" evidence="1">
    <location>
        <begin position="132"/>
        <end position="134"/>
    </location>
    <ligand>
        <name>ATP</name>
        <dbReference type="ChEBI" id="CHEBI:30616"/>
    </ligand>
</feature>
<feature type="binding site" evidence="1">
    <location>
        <position position="175"/>
    </location>
    <ligand>
        <name>ATP</name>
        <dbReference type="ChEBI" id="CHEBI:30616"/>
    </ligand>
</feature>
<feature type="binding site" evidence="1">
    <location>
        <position position="185"/>
    </location>
    <ligand>
        <name>ATP</name>
        <dbReference type="ChEBI" id="CHEBI:30616"/>
    </ligand>
</feature>
<feature type="binding site" evidence="1">
    <location>
        <position position="222"/>
    </location>
    <ligand>
        <name>ATP</name>
        <dbReference type="ChEBI" id="CHEBI:30616"/>
    </ligand>
</feature>
<feature type="binding site" evidence="1">
    <location>
        <position position="295"/>
    </location>
    <ligand>
        <name>DNA</name>
        <dbReference type="ChEBI" id="CHEBI:16991"/>
    </ligand>
</feature>
<feature type="binding site" evidence="1">
    <location>
        <position position="314"/>
    </location>
    <ligand>
        <name>DNA</name>
        <dbReference type="ChEBI" id="CHEBI:16991"/>
    </ligand>
</feature>
<feature type="binding site" evidence="1">
    <location>
        <position position="319"/>
    </location>
    <ligand>
        <name>DNA</name>
        <dbReference type="ChEBI" id="CHEBI:16991"/>
    </ligand>
</feature>
<proteinExistence type="inferred from homology"/>
<evidence type="ECO:0000255" key="1">
    <source>
        <dbReference type="HAMAP-Rule" id="MF_00016"/>
    </source>
</evidence>
<reference key="1">
    <citation type="submission" date="2006-03" db="EMBL/GenBank/DDBJ databases">
        <title>Complete sequence of Methylobacillus flagellatus KT.</title>
        <authorList>
            <consortium name="US DOE Joint Genome Institute"/>
            <person name="Copeland A."/>
            <person name="Lucas S."/>
            <person name="Lapidus A."/>
            <person name="Barry K."/>
            <person name="Detter J.C."/>
            <person name="Glavina del Rio T."/>
            <person name="Hammon N."/>
            <person name="Israni S."/>
            <person name="Dalin E."/>
            <person name="Tice H."/>
            <person name="Pitluck S."/>
            <person name="Brettin T."/>
            <person name="Bruce D."/>
            <person name="Han C."/>
            <person name="Tapia R."/>
            <person name="Saunders E."/>
            <person name="Gilna P."/>
            <person name="Schmutz J."/>
            <person name="Larimer F."/>
            <person name="Land M."/>
            <person name="Kyrpides N."/>
            <person name="Anderson I."/>
            <person name="Richardson P."/>
        </authorList>
    </citation>
    <scope>NUCLEOTIDE SEQUENCE [LARGE SCALE GENOMIC DNA]</scope>
    <source>
        <strain>ATCC 51484 / DSM 6875 / VKM B-1610 / KT</strain>
    </source>
</reference>
<sequence length="345" mass="38012">MIETDRLIAPSTQGTQEEALECALRPKVLDEYVGQEKARGQLEIFINAARGRSEALDHVLLFGPPGLGKTTLAHIIAKEMGVNMRQTSGPVLERAGDLAALLTNLEPNDVLFIDEIHRLSPVVEEILYPAMEDYRLDIMIGEGPAARSVRLDLPPFTLVGATTRAGMLTNPLRDRFGIVSRLEFYTADELARIVHRSAGLLEVAIQQEGALEIARRSRGTPRIANRLLRRVRDYAQVKSDGVVSADIADAALKMLDVDKLGFDVMDRKLLLAVLEKFDGGPVGLDNLAAAIGEERDTIEDVLEPYLIQQGYLMRTPRGRIATQQAYQHFGLAIPGKIGTGELWQQ</sequence>
<accession>Q1GYS6</accession>
<dbReference type="EC" id="3.6.4.-" evidence="1"/>
<dbReference type="EMBL" id="CP000284">
    <property type="protein sequence ID" value="ABE50611.1"/>
    <property type="molecule type" value="Genomic_DNA"/>
</dbReference>
<dbReference type="RefSeq" id="WP_011480564.1">
    <property type="nucleotide sequence ID" value="NC_007947.1"/>
</dbReference>
<dbReference type="SMR" id="Q1GYS6"/>
<dbReference type="STRING" id="265072.Mfla_2344"/>
<dbReference type="KEGG" id="mfa:Mfla_2344"/>
<dbReference type="eggNOG" id="COG2255">
    <property type="taxonomic scope" value="Bacteria"/>
</dbReference>
<dbReference type="HOGENOM" id="CLU_055599_1_0_4"/>
<dbReference type="OrthoDB" id="9804478at2"/>
<dbReference type="Proteomes" id="UP000002440">
    <property type="component" value="Chromosome"/>
</dbReference>
<dbReference type="GO" id="GO:0005737">
    <property type="term" value="C:cytoplasm"/>
    <property type="evidence" value="ECO:0007669"/>
    <property type="project" value="UniProtKB-SubCell"/>
</dbReference>
<dbReference type="GO" id="GO:0048476">
    <property type="term" value="C:Holliday junction resolvase complex"/>
    <property type="evidence" value="ECO:0007669"/>
    <property type="project" value="UniProtKB-UniRule"/>
</dbReference>
<dbReference type="GO" id="GO:0005524">
    <property type="term" value="F:ATP binding"/>
    <property type="evidence" value="ECO:0007669"/>
    <property type="project" value="UniProtKB-UniRule"/>
</dbReference>
<dbReference type="GO" id="GO:0016887">
    <property type="term" value="F:ATP hydrolysis activity"/>
    <property type="evidence" value="ECO:0007669"/>
    <property type="project" value="InterPro"/>
</dbReference>
<dbReference type="GO" id="GO:0000400">
    <property type="term" value="F:four-way junction DNA binding"/>
    <property type="evidence" value="ECO:0007669"/>
    <property type="project" value="UniProtKB-UniRule"/>
</dbReference>
<dbReference type="GO" id="GO:0009378">
    <property type="term" value="F:four-way junction helicase activity"/>
    <property type="evidence" value="ECO:0007669"/>
    <property type="project" value="InterPro"/>
</dbReference>
<dbReference type="GO" id="GO:0006310">
    <property type="term" value="P:DNA recombination"/>
    <property type="evidence" value="ECO:0007669"/>
    <property type="project" value="UniProtKB-UniRule"/>
</dbReference>
<dbReference type="GO" id="GO:0006281">
    <property type="term" value="P:DNA repair"/>
    <property type="evidence" value="ECO:0007669"/>
    <property type="project" value="UniProtKB-UniRule"/>
</dbReference>
<dbReference type="CDD" id="cd00009">
    <property type="entry name" value="AAA"/>
    <property type="match status" value="1"/>
</dbReference>
<dbReference type="FunFam" id="1.10.10.10:FF:000086">
    <property type="entry name" value="Holliday junction ATP-dependent DNA helicase RuvB"/>
    <property type="match status" value="1"/>
</dbReference>
<dbReference type="FunFam" id="1.10.8.60:FF:000023">
    <property type="entry name" value="Holliday junction ATP-dependent DNA helicase RuvB"/>
    <property type="match status" value="1"/>
</dbReference>
<dbReference type="FunFam" id="3.40.50.300:FF:000073">
    <property type="entry name" value="Holliday junction ATP-dependent DNA helicase RuvB"/>
    <property type="match status" value="1"/>
</dbReference>
<dbReference type="Gene3D" id="1.10.8.60">
    <property type="match status" value="1"/>
</dbReference>
<dbReference type="Gene3D" id="3.40.50.300">
    <property type="entry name" value="P-loop containing nucleotide triphosphate hydrolases"/>
    <property type="match status" value="1"/>
</dbReference>
<dbReference type="Gene3D" id="1.10.10.10">
    <property type="entry name" value="Winged helix-like DNA-binding domain superfamily/Winged helix DNA-binding domain"/>
    <property type="match status" value="1"/>
</dbReference>
<dbReference type="HAMAP" id="MF_00016">
    <property type="entry name" value="DNA_HJ_migration_RuvB"/>
    <property type="match status" value="1"/>
</dbReference>
<dbReference type="InterPro" id="IPR003593">
    <property type="entry name" value="AAA+_ATPase"/>
</dbReference>
<dbReference type="InterPro" id="IPR041445">
    <property type="entry name" value="AAA_lid_4"/>
</dbReference>
<dbReference type="InterPro" id="IPR004605">
    <property type="entry name" value="DNA_helicase_Holl-junc_RuvB"/>
</dbReference>
<dbReference type="InterPro" id="IPR027417">
    <property type="entry name" value="P-loop_NTPase"/>
</dbReference>
<dbReference type="InterPro" id="IPR008824">
    <property type="entry name" value="RuvB-like_N"/>
</dbReference>
<dbReference type="InterPro" id="IPR008823">
    <property type="entry name" value="RuvB_C"/>
</dbReference>
<dbReference type="InterPro" id="IPR036388">
    <property type="entry name" value="WH-like_DNA-bd_sf"/>
</dbReference>
<dbReference type="InterPro" id="IPR036390">
    <property type="entry name" value="WH_DNA-bd_sf"/>
</dbReference>
<dbReference type="NCBIfam" id="NF000868">
    <property type="entry name" value="PRK00080.1"/>
    <property type="match status" value="1"/>
</dbReference>
<dbReference type="NCBIfam" id="TIGR00635">
    <property type="entry name" value="ruvB"/>
    <property type="match status" value="1"/>
</dbReference>
<dbReference type="PANTHER" id="PTHR42848">
    <property type="match status" value="1"/>
</dbReference>
<dbReference type="PANTHER" id="PTHR42848:SF1">
    <property type="entry name" value="HOLLIDAY JUNCTION BRANCH MIGRATION COMPLEX SUBUNIT RUVB"/>
    <property type="match status" value="1"/>
</dbReference>
<dbReference type="Pfam" id="PF17864">
    <property type="entry name" value="AAA_lid_4"/>
    <property type="match status" value="1"/>
</dbReference>
<dbReference type="Pfam" id="PF05491">
    <property type="entry name" value="RuvB_C"/>
    <property type="match status" value="1"/>
</dbReference>
<dbReference type="Pfam" id="PF05496">
    <property type="entry name" value="RuvB_N"/>
    <property type="match status" value="1"/>
</dbReference>
<dbReference type="SMART" id="SM00382">
    <property type="entry name" value="AAA"/>
    <property type="match status" value="1"/>
</dbReference>
<dbReference type="SUPFAM" id="SSF52540">
    <property type="entry name" value="P-loop containing nucleoside triphosphate hydrolases"/>
    <property type="match status" value="1"/>
</dbReference>
<dbReference type="SUPFAM" id="SSF46785">
    <property type="entry name" value="Winged helix' DNA-binding domain"/>
    <property type="match status" value="1"/>
</dbReference>